<organism>
    <name type="scientific">Laribacter hongkongensis (strain HLHK9)</name>
    <dbReference type="NCBI Taxonomy" id="557598"/>
    <lineage>
        <taxon>Bacteria</taxon>
        <taxon>Pseudomonadati</taxon>
        <taxon>Pseudomonadota</taxon>
        <taxon>Betaproteobacteria</taxon>
        <taxon>Neisseriales</taxon>
        <taxon>Aquaspirillaceae</taxon>
        <taxon>Laribacter</taxon>
    </lineage>
</organism>
<accession>C1D558</accession>
<feature type="chain" id="PRO_1000191060" description="2-C-methyl-D-erythritol 4-phosphate cytidylyltransferase">
    <location>
        <begin position="1"/>
        <end position="230"/>
    </location>
</feature>
<feature type="site" description="Transition state stabilizer" evidence="1">
    <location>
        <position position="16"/>
    </location>
</feature>
<feature type="site" description="Transition state stabilizer" evidence="1">
    <location>
        <position position="23"/>
    </location>
</feature>
<feature type="site" description="Positions MEP for the nucleophilic attack" evidence="1">
    <location>
        <position position="155"/>
    </location>
</feature>
<feature type="site" description="Positions MEP for the nucleophilic attack" evidence="1">
    <location>
        <position position="209"/>
    </location>
</feature>
<evidence type="ECO:0000255" key="1">
    <source>
        <dbReference type="HAMAP-Rule" id="MF_00108"/>
    </source>
</evidence>
<reference key="1">
    <citation type="journal article" date="2009" name="PLoS Genet.">
        <title>The complete genome and proteome of Laribacter hongkongensis reveal potential mechanisms for adaptations to different temperatures and habitats.</title>
        <authorList>
            <person name="Woo P.C.Y."/>
            <person name="Lau S.K.P."/>
            <person name="Tse H."/>
            <person name="Teng J.L.L."/>
            <person name="Curreem S.O."/>
            <person name="Tsang A.K.L."/>
            <person name="Fan R.Y.Y."/>
            <person name="Wong G.K.M."/>
            <person name="Huang Y."/>
            <person name="Loman N.J."/>
            <person name="Snyder L.A.S."/>
            <person name="Cai J.J."/>
            <person name="Huang J.-D."/>
            <person name="Mak W."/>
            <person name="Pallen M.J."/>
            <person name="Lok S."/>
            <person name="Yuen K.-Y."/>
        </authorList>
    </citation>
    <scope>NUCLEOTIDE SEQUENCE [LARGE SCALE GENOMIC DNA]</scope>
    <source>
        <strain>HLHK9</strain>
    </source>
</reference>
<sequence>MSRCLALVPAAGGGSRMGADRPKQYLDLAGAPLLAHTLRRLLAEPRLARVLVVLAPDDVWFDRFDWPRDVRLEILRVGGATRAESVRNGLLHAGAAADDWVLVHDAARCCLPPDALDRLIDTLQADPVGGLLALPVADTLKRETSGQRVAQTVSREGLWLAQTPQMFRAGMLALALDRPLDRAVTDEASAIERLGLVPRLVTGDALNFKVTWPHDLVLARAVLGLDNAGK</sequence>
<comment type="function">
    <text evidence="1">Catalyzes the formation of 4-diphosphocytidyl-2-C-methyl-D-erythritol from CTP and 2-C-methyl-D-erythritol 4-phosphate (MEP).</text>
</comment>
<comment type="catalytic activity">
    <reaction evidence="1">
        <text>2-C-methyl-D-erythritol 4-phosphate + CTP + H(+) = 4-CDP-2-C-methyl-D-erythritol + diphosphate</text>
        <dbReference type="Rhea" id="RHEA:13429"/>
        <dbReference type="ChEBI" id="CHEBI:15378"/>
        <dbReference type="ChEBI" id="CHEBI:33019"/>
        <dbReference type="ChEBI" id="CHEBI:37563"/>
        <dbReference type="ChEBI" id="CHEBI:57823"/>
        <dbReference type="ChEBI" id="CHEBI:58262"/>
        <dbReference type="EC" id="2.7.7.60"/>
    </reaction>
</comment>
<comment type="pathway">
    <text evidence="1">Isoprenoid biosynthesis; isopentenyl diphosphate biosynthesis via DXP pathway; isopentenyl diphosphate from 1-deoxy-D-xylulose 5-phosphate: step 2/6.</text>
</comment>
<comment type="similarity">
    <text evidence="1">Belongs to the IspD/TarI cytidylyltransferase family. IspD subfamily.</text>
</comment>
<keyword id="KW-0414">Isoprene biosynthesis</keyword>
<keyword id="KW-0548">Nucleotidyltransferase</keyword>
<keyword id="KW-1185">Reference proteome</keyword>
<keyword id="KW-0808">Transferase</keyword>
<name>ISPD_LARHH</name>
<proteinExistence type="inferred from homology"/>
<gene>
    <name evidence="1" type="primary">ispD</name>
    <name type="ordered locus">LHK_00882</name>
</gene>
<dbReference type="EC" id="2.7.7.60" evidence="1"/>
<dbReference type="EMBL" id="CP001154">
    <property type="protein sequence ID" value="ACO73875.1"/>
    <property type="molecule type" value="Genomic_DNA"/>
</dbReference>
<dbReference type="RefSeq" id="WP_012696367.1">
    <property type="nucleotide sequence ID" value="NC_012559.1"/>
</dbReference>
<dbReference type="SMR" id="C1D558"/>
<dbReference type="STRING" id="557598.LHK_00882"/>
<dbReference type="GeneID" id="75110207"/>
<dbReference type="KEGG" id="lhk:LHK_00882"/>
<dbReference type="eggNOG" id="COG1211">
    <property type="taxonomic scope" value="Bacteria"/>
</dbReference>
<dbReference type="HOGENOM" id="CLU_061281_3_0_4"/>
<dbReference type="UniPathway" id="UPA00056">
    <property type="reaction ID" value="UER00093"/>
</dbReference>
<dbReference type="Proteomes" id="UP000002010">
    <property type="component" value="Chromosome"/>
</dbReference>
<dbReference type="GO" id="GO:0050518">
    <property type="term" value="F:2-C-methyl-D-erythritol 4-phosphate cytidylyltransferase activity"/>
    <property type="evidence" value="ECO:0007669"/>
    <property type="project" value="UniProtKB-UniRule"/>
</dbReference>
<dbReference type="GO" id="GO:0019288">
    <property type="term" value="P:isopentenyl diphosphate biosynthetic process, methylerythritol 4-phosphate pathway"/>
    <property type="evidence" value="ECO:0007669"/>
    <property type="project" value="UniProtKB-UniRule"/>
</dbReference>
<dbReference type="CDD" id="cd02516">
    <property type="entry name" value="CDP-ME_synthetase"/>
    <property type="match status" value="1"/>
</dbReference>
<dbReference type="FunFam" id="3.90.550.10:FF:000003">
    <property type="entry name" value="2-C-methyl-D-erythritol 4-phosphate cytidylyltransferase"/>
    <property type="match status" value="1"/>
</dbReference>
<dbReference type="Gene3D" id="3.90.550.10">
    <property type="entry name" value="Spore Coat Polysaccharide Biosynthesis Protein SpsA, Chain A"/>
    <property type="match status" value="1"/>
</dbReference>
<dbReference type="HAMAP" id="MF_00108">
    <property type="entry name" value="IspD"/>
    <property type="match status" value="1"/>
</dbReference>
<dbReference type="InterPro" id="IPR001228">
    <property type="entry name" value="IspD"/>
</dbReference>
<dbReference type="InterPro" id="IPR034683">
    <property type="entry name" value="IspD/TarI"/>
</dbReference>
<dbReference type="InterPro" id="IPR050088">
    <property type="entry name" value="IspD/TarI_cytidylyltransf_bact"/>
</dbReference>
<dbReference type="InterPro" id="IPR018294">
    <property type="entry name" value="ISPD_synthase_CS"/>
</dbReference>
<dbReference type="InterPro" id="IPR029044">
    <property type="entry name" value="Nucleotide-diphossugar_trans"/>
</dbReference>
<dbReference type="NCBIfam" id="TIGR00453">
    <property type="entry name" value="ispD"/>
    <property type="match status" value="1"/>
</dbReference>
<dbReference type="PANTHER" id="PTHR32125">
    <property type="entry name" value="2-C-METHYL-D-ERYTHRITOL 4-PHOSPHATE CYTIDYLYLTRANSFERASE, CHLOROPLASTIC"/>
    <property type="match status" value="1"/>
</dbReference>
<dbReference type="PANTHER" id="PTHR32125:SF4">
    <property type="entry name" value="2-C-METHYL-D-ERYTHRITOL 4-PHOSPHATE CYTIDYLYLTRANSFERASE, CHLOROPLASTIC"/>
    <property type="match status" value="1"/>
</dbReference>
<dbReference type="Pfam" id="PF01128">
    <property type="entry name" value="IspD"/>
    <property type="match status" value="1"/>
</dbReference>
<dbReference type="SUPFAM" id="SSF53448">
    <property type="entry name" value="Nucleotide-diphospho-sugar transferases"/>
    <property type="match status" value="1"/>
</dbReference>
<dbReference type="PROSITE" id="PS01295">
    <property type="entry name" value="ISPD"/>
    <property type="match status" value="1"/>
</dbReference>
<protein>
    <recommendedName>
        <fullName evidence="1">2-C-methyl-D-erythritol 4-phosphate cytidylyltransferase</fullName>
        <ecNumber evidence="1">2.7.7.60</ecNumber>
    </recommendedName>
    <alternativeName>
        <fullName evidence="1">4-diphosphocytidyl-2C-methyl-D-erythritol synthase</fullName>
    </alternativeName>
    <alternativeName>
        <fullName evidence="1">MEP cytidylyltransferase</fullName>
        <shortName evidence="1">MCT</shortName>
    </alternativeName>
</protein>